<keyword id="KW-1185">Reference proteome</keyword>
<keyword id="KW-0687">Ribonucleoprotein</keyword>
<keyword id="KW-0689">Ribosomal protein</keyword>
<keyword id="KW-0694">RNA-binding</keyword>
<keyword id="KW-0699">rRNA-binding</keyword>
<gene>
    <name evidence="1" type="primary">rplR</name>
    <name type="ordered locus">Pnap_0336</name>
</gene>
<protein>
    <recommendedName>
        <fullName evidence="1">Large ribosomal subunit protein uL18</fullName>
    </recommendedName>
    <alternativeName>
        <fullName evidence="2">50S ribosomal protein L18</fullName>
    </alternativeName>
</protein>
<reference key="1">
    <citation type="journal article" date="2009" name="Environ. Microbiol.">
        <title>The genome of Polaromonas naphthalenivorans strain CJ2, isolated from coal tar-contaminated sediment, reveals physiological and metabolic versatility and evolution through extensive horizontal gene transfer.</title>
        <authorList>
            <person name="Yagi J.M."/>
            <person name="Sims D."/>
            <person name="Brettin T."/>
            <person name="Bruce D."/>
            <person name="Madsen E.L."/>
        </authorList>
    </citation>
    <scope>NUCLEOTIDE SEQUENCE [LARGE SCALE GENOMIC DNA]</scope>
    <source>
        <strain>CJ2</strain>
    </source>
</reference>
<comment type="function">
    <text evidence="1">This is one of the proteins that bind and probably mediate the attachment of the 5S RNA into the large ribosomal subunit, where it forms part of the central protuberance.</text>
</comment>
<comment type="subunit">
    <text evidence="1">Part of the 50S ribosomal subunit; part of the 5S rRNA/L5/L18/L25 subcomplex. Contacts the 5S and 23S rRNAs.</text>
</comment>
<comment type="similarity">
    <text evidence="1">Belongs to the universal ribosomal protein uL18 family.</text>
</comment>
<proteinExistence type="inferred from homology"/>
<sequence>MLTKKEQRLRRSRQTRIRIANQGVARLSVNRTNLHIYASVISGDGTKVLASASTAEVEVRNEIGGSGKGGNVAAAQAIGKRIAEKAKAAGVEKVAFDRAGFAYHGRVKALADAAREAGLQF</sequence>
<organism>
    <name type="scientific">Polaromonas naphthalenivorans (strain CJ2)</name>
    <dbReference type="NCBI Taxonomy" id="365044"/>
    <lineage>
        <taxon>Bacteria</taxon>
        <taxon>Pseudomonadati</taxon>
        <taxon>Pseudomonadota</taxon>
        <taxon>Betaproteobacteria</taxon>
        <taxon>Burkholderiales</taxon>
        <taxon>Comamonadaceae</taxon>
        <taxon>Polaromonas</taxon>
    </lineage>
</organism>
<accession>A1VJ31</accession>
<feature type="chain" id="PRO_1000053077" description="Large ribosomal subunit protein uL18">
    <location>
        <begin position="1"/>
        <end position="121"/>
    </location>
</feature>
<dbReference type="EMBL" id="CP000529">
    <property type="protein sequence ID" value="ABM35659.1"/>
    <property type="molecule type" value="Genomic_DNA"/>
</dbReference>
<dbReference type="RefSeq" id="WP_011799765.1">
    <property type="nucleotide sequence ID" value="NC_008781.1"/>
</dbReference>
<dbReference type="SMR" id="A1VJ31"/>
<dbReference type="STRING" id="365044.Pnap_0336"/>
<dbReference type="KEGG" id="pna:Pnap_0336"/>
<dbReference type="eggNOG" id="COG0256">
    <property type="taxonomic scope" value="Bacteria"/>
</dbReference>
<dbReference type="HOGENOM" id="CLU_098841_0_1_4"/>
<dbReference type="OrthoDB" id="9810939at2"/>
<dbReference type="Proteomes" id="UP000000644">
    <property type="component" value="Chromosome"/>
</dbReference>
<dbReference type="GO" id="GO:0022625">
    <property type="term" value="C:cytosolic large ribosomal subunit"/>
    <property type="evidence" value="ECO:0007669"/>
    <property type="project" value="TreeGrafter"/>
</dbReference>
<dbReference type="GO" id="GO:0008097">
    <property type="term" value="F:5S rRNA binding"/>
    <property type="evidence" value="ECO:0007669"/>
    <property type="project" value="TreeGrafter"/>
</dbReference>
<dbReference type="GO" id="GO:0003735">
    <property type="term" value="F:structural constituent of ribosome"/>
    <property type="evidence" value="ECO:0007669"/>
    <property type="project" value="InterPro"/>
</dbReference>
<dbReference type="GO" id="GO:0006412">
    <property type="term" value="P:translation"/>
    <property type="evidence" value="ECO:0007669"/>
    <property type="project" value="UniProtKB-UniRule"/>
</dbReference>
<dbReference type="CDD" id="cd00432">
    <property type="entry name" value="Ribosomal_L18_L5e"/>
    <property type="match status" value="1"/>
</dbReference>
<dbReference type="FunFam" id="3.30.420.100:FF:000001">
    <property type="entry name" value="50S ribosomal protein L18"/>
    <property type="match status" value="1"/>
</dbReference>
<dbReference type="Gene3D" id="3.30.420.100">
    <property type="match status" value="1"/>
</dbReference>
<dbReference type="HAMAP" id="MF_01337_B">
    <property type="entry name" value="Ribosomal_uL18_B"/>
    <property type="match status" value="1"/>
</dbReference>
<dbReference type="InterPro" id="IPR004389">
    <property type="entry name" value="Ribosomal_uL18_bac-type"/>
</dbReference>
<dbReference type="InterPro" id="IPR005484">
    <property type="entry name" value="Ribosomal_uL18_bac/euk"/>
</dbReference>
<dbReference type="NCBIfam" id="TIGR00060">
    <property type="entry name" value="L18_bact"/>
    <property type="match status" value="1"/>
</dbReference>
<dbReference type="PANTHER" id="PTHR12899">
    <property type="entry name" value="39S RIBOSOMAL PROTEIN L18, MITOCHONDRIAL"/>
    <property type="match status" value="1"/>
</dbReference>
<dbReference type="PANTHER" id="PTHR12899:SF3">
    <property type="entry name" value="LARGE RIBOSOMAL SUBUNIT PROTEIN UL18M"/>
    <property type="match status" value="1"/>
</dbReference>
<dbReference type="Pfam" id="PF00861">
    <property type="entry name" value="Ribosomal_L18p"/>
    <property type="match status" value="1"/>
</dbReference>
<dbReference type="SUPFAM" id="SSF53137">
    <property type="entry name" value="Translational machinery components"/>
    <property type="match status" value="1"/>
</dbReference>
<evidence type="ECO:0000255" key="1">
    <source>
        <dbReference type="HAMAP-Rule" id="MF_01337"/>
    </source>
</evidence>
<evidence type="ECO:0000305" key="2"/>
<name>RL18_POLNA</name>